<organism>
    <name type="scientific">Roseobacter denitrificans (strain ATCC 33942 / OCh 114)</name>
    <name type="common">Erythrobacter sp. (strain OCh 114)</name>
    <name type="synonym">Roseobacter denitrificans</name>
    <dbReference type="NCBI Taxonomy" id="375451"/>
    <lineage>
        <taxon>Bacteria</taxon>
        <taxon>Pseudomonadati</taxon>
        <taxon>Pseudomonadota</taxon>
        <taxon>Alphaproteobacteria</taxon>
        <taxon>Rhodobacterales</taxon>
        <taxon>Roseobacteraceae</taxon>
        <taxon>Roseobacter</taxon>
    </lineage>
</organism>
<accession>Q168E6</accession>
<feature type="chain" id="PRO_0000248918" description="Proline--tRNA ligase">
    <location>
        <begin position="1"/>
        <end position="451"/>
    </location>
</feature>
<comment type="function">
    <text evidence="1">Catalyzes the attachment of proline to tRNA(Pro) in a two-step reaction: proline is first activated by ATP to form Pro-AMP and then transferred to the acceptor end of tRNA(Pro).</text>
</comment>
<comment type="catalytic activity">
    <reaction evidence="1">
        <text>tRNA(Pro) + L-proline + ATP = L-prolyl-tRNA(Pro) + AMP + diphosphate</text>
        <dbReference type="Rhea" id="RHEA:14305"/>
        <dbReference type="Rhea" id="RHEA-COMP:9700"/>
        <dbReference type="Rhea" id="RHEA-COMP:9702"/>
        <dbReference type="ChEBI" id="CHEBI:30616"/>
        <dbReference type="ChEBI" id="CHEBI:33019"/>
        <dbReference type="ChEBI" id="CHEBI:60039"/>
        <dbReference type="ChEBI" id="CHEBI:78442"/>
        <dbReference type="ChEBI" id="CHEBI:78532"/>
        <dbReference type="ChEBI" id="CHEBI:456215"/>
        <dbReference type="EC" id="6.1.1.15"/>
    </reaction>
</comment>
<comment type="subunit">
    <text evidence="1">Homodimer.</text>
</comment>
<comment type="subcellular location">
    <subcellularLocation>
        <location evidence="1">Cytoplasm</location>
    </subcellularLocation>
</comment>
<comment type="similarity">
    <text evidence="1">Belongs to the class-II aminoacyl-tRNA synthetase family. ProS type 2 subfamily.</text>
</comment>
<keyword id="KW-0030">Aminoacyl-tRNA synthetase</keyword>
<keyword id="KW-0067">ATP-binding</keyword>
<keyword id="KW-0963">Cytoplasm</keyword>
<keyword id="KW-0436">Ligase</keyword>
<keyword id="KW-0547">Nucleotide-binding</keyword>
<keyword id="KW-0648">Protein biosynthesis</keyword>
<keyword id="KW-1185">Reference proteome</keyword>
<name>SYP_ROSDO</name>
<reference key="1">
    <citation type="journal article" date="2007" name="J. Bacteriol.">
        <title>The complete genome sequence of Roseobacter denitrificans reveals a mixotrophic rather than photosynthetic metabolism.</title>
        <authorList>
            <person name="Swingley W.D."/>
            <person name="Sadekar S."/>
            <person name="Mastrian S.D."/>
            <person name="Matthies H.J."/>
            <person name="Hao J."/>
            <person name="Ramos H."/>
            <person name="Acharya C.R."/>
            <person name="Conrad A.L."/>
            <person name="Taylor H.L."/>
            <person name="Dejesa L.C."/>
            <person name="Shah M.K."/>
            <person name="O'Huallachain M.E."/>
            <person name="Lince M.T."/>
            <person name="Blankenship R.E."/>
            <person name="Beatty J.T."/>
            <person name="Touchman J.W."/>
        </authorList>
    </citation>
    <scope>NUCLEOTIDE SEQUENCE [LARGE SCALE GENOMIC DNA]</scope>
    <source>
        <strain>ATCC 33942 / OCh 114</strain>
    </source>
</reference>
<gene>
    <name evidence="1" type="primary">proS</name>
    <name type="ordered locus">RD1_2045</name>
</gene>
<sequence>MRLTRYFMPVLRENPAEAQIVSHRLMLRAGMIKQNAAGIYSWLPLGFKVLRKLENIVHEEQIRAGHVPMLMPTMQSADLWRESGRYDAYGPEMLRIRDRQDRDMLFGPTNEEMITDIFRSHVSSYKDLPLTLYHIQWKFRDEMRPRFGVMRGREFFMKDGYNFDLTKEDALHAYNRHLVSYLRTYERMGLQAIPMRADSGPIGGDDTHEFLVLADTGESEVFYDSAVTDLTFGDRDIDYDSVEQCQGVMEEFTNLYARTDETHDQALFAAIPAERQRQARGIEVGQIFYFGTKYSDAMGAKVQGPDGKPTAVHMGSHGIGVSRLVGAIIEASHDEKGIIWPEGVTPFHCGIVNLKQGDTEADAACDALYASLRALGLDPLYDDRKERAGGKFATMDLIGLPWRITVGPRGLKNGVVELTSRKTGESSELPPEEAIEKIAKIYAPHHVSGNL</sequence>
<proteinExistence type="inferred from homology"/>
<protein>
    <recommendedName>
        <fullName evidence="1">Proline--tRNA ligase</fullName>
        <ecNumber evidence="1">6.1.1.15</ecNumber>
    </recommendedName>
    <alternativeName>
        <fullName evidence="1">Prolyl-tRNA synthetase</fullName>
        <shortName evidence="1">ProRS</shortName>
    </alternativeName>
</protein>
<dbReference type="EC" id="6.1.1.15" evidence="1"/>
<dbReference type="EMBL" id="CP000362">
    <property type="protein sequence ID" value="ABG31647.1"/>
    <property type="molecule type" value="Genomic_DNA"/>
</dbReference>
<dbReference type="RefSeq" id="WP_011568264.1">
    <property type="nucleotide sequence ID" value="NC_008209.1"/>
</dbReference>
<dbReference type="SMR" id="Q168E6"/>
<dbReference type="STRING" id="375451.RD1_2045"/>
<dbReference type="KEGG" id="rde:RD1_2045"/>
<dbReference type="eggNOG" id="COG0442">
    <property type="taxonomic scope" value="Bacteria"/>
</dbReference>
<dbReference type="HOGENOM" id="CLU_016739_4_2_5"/>
<dbReference type="OrthoDB" id="9809052at2"/>
<dbReference type="Proteomes" id="UP000007029">
    <property type="component" value="Chromosome"/>
</dbReference>
<dbReference type="GO" id="GO:0005829">
    <property type="term" value="C:cytosol"/>
    <property type="evidence" value="ECO:0007669"/>
    <property type="project" value="TreeGrafter"/>
</dbReference>
<dbReference type="GO" id="GO:0005524">
    <property type="term" value="F:ATP binding"/>
    <property type="evidence" value="ECO:0007669"/>
    <property type="project" value="UniProtKB-UniRule"/>
</dbReference>
<dbReference type="GO" id="GO:0004827">
    <property type="term" value="F:proline-tRNA ligase activity"/>
    <property type="evidence" value="ECO:0007669"/>
    <property type="project" value="UniProtKB-UniRule"/>
</dbReference>
<dbReference type="GO" id="GO:0006433">
    <property type="term" value="P:prolyl-tRNA aminoacylation"/>
    <property type="evidence" value="ECO:0007669"/>
    <property type="project" value="UniProtKB-UniRule"/>
</dbReference>
<dbReference type="CDD" id="cd00861">
    <property type="entry name" value="ProRS_anticodon_short"/>
    <property type="match status" value="1"/>
</dbReference>
<dbReference type="CDD" id="cd00779">
    <property type="entry name" value="ProRS_core_prok"/>
    <property type="match status" value="1"/>
</dbReference>
<dbReference type="FunFam" id="3.30.930.10:FF:000042">
    <property type="entry name" value="probable proline--tRNA ligase, mitochondrial"/>
    <property type="match status" value="1"/>
</dbReference>
<dbReference type="Gene3D" id="3.40.50.800">
    <property type="entry name" value="Anticodon-binding domain"/>
    <property type="match status" value="1"/>
</dbReference>
<dbReference type="Gene3D" id="3.30.930.10">
    <property type="entry name" value="Bira Bifunctional Protein, Domain 2"/>
    <property type="match status" value="1"/>
</dbReference>
<dbReference type="HAMAP" id="MF_01570">
    <property type="entry name" value="Pro_tRNA_synth_type2"/>
    <property type="match status" value="1"/>
</dbReference>
<dbReference type="InterPro" id="IPR002314">
    <property type="entry name" value="aa-tRNA-synt_IIb"/>
</dbReference>
<dbReference type="InterPro" id="IPR006195">
    <property type="entry name" value="aa-tRNA-synth_II"/>
</dbReference>
<dbReference type="InterPro" id="IPR045864">
    <property type="entry name" value="aa-tRNA-synth_II/BPL/LPL"/>
</dbReference>
<dbReference type="InterPro" id="IPR004154">
    <property type="entry name" value="Anticodon-bd"/>
</dbReference>
<dbReference type="InterPro" id="IPR036621">
    <property type="entry name" value="Anticodon-bd_dom_sf"/>
</dbReference>
<dbReference type="InterPro" id="IPR002316">
    <property type="entry name" value="Pro-tRNA-ligase_IIa"/>
</dbReference>
<dbReference type="InterPro" id="IPR050062">
    <property type="entry name" value="Pro-tRNA_synthetase"/>
</dbReference>
<dbReference type="InterPro" id="IPR023716">
    <property type="entry name" value="Prolyl-tRNA_ligase_IIa_type2"/>
</dbReference>
<dbReference type="InterPro" id="IPR044140">
    <property type="entry name" value="ProRS_anticodon_short"/>
</dbReference>
<dbReference type="InterPro" id="IPR033730">
    <property type="entry name" value="ProRS_core_prok"/>
</dbReference>
<dbReference type="NCBIfam" id="NF008979">
    <property type="entry name" value="PRK12325.1"/>
    <property type="match status" value="1"/>
</dbReference>
<dbReference type="PANTHER" id="PTHR42753">
    <property type="entry name" value="MITOCHONDRIAL RIBOSOME PROTEIN L39/PROLYL-TRNA LIGASE FAMILY MEMBER"/>
    <property type="match status" value="1"/>
</dbReference>
<dbReference type="PANTHER" id="PTHR42753:SF2">
    <property type="entry name" value="PROLINE--TRNA LIGASE"/>
    <property type="match status" value="1"/>
</dbReference>
<dbReference type="Pfam" id="PF03129">
    <property type="entry name" value="HGTP_anticodon"/>
    <property type="match status" value="1"/>
</dbReference>
<dbReference type="Pfam" id="PF00587">
    <property type="entry name" value="tRNA-synt_2b"/>
    <property type="match status" value="1"/>
</dbReference>
<dbReference type="PRINTS" id="PR01046">
    <property type="entry name" value="TRNASYNTHPRO"/>
</dbReference>
<dbReference type="SUPFAM" id="SSF52954">
    <property type="entry name" value="Class II aaRS ABD-related"/>
    <property type="match status" value="1"/>
</dbReference>
<dbReference type="SUPFAM" id="SSF55681">
    <property type="entry name" value="Class II aaRS and biotin synthetases"/>
    <property type="match status" value="1"/>
</dbReference>
<dbReference type="PROSITE" id="PS50862">
    <property type="entry name" value="AA_TRNA_LIGASE_II"/>
    <property type="match status" value="1"/>
</dbReference>
<evidence type="ECO:0000255" key="1">
    <source>
        <dbReference type="HAMAP-Rule" id="MF_01570"/>
    </source>
</evidence>